<name>MSHR_CHLAE</name>
<proteinExistence type="inferred from homology"/>
<gene>
    <name type="primary">MC1R</name>
</gene>
<evidence type="ECO:0000250" key="1">
    <source>
        <dbReference type="UniProtKB" id="Q01726"/>
    </source>
</evidence>
<evidence type="ECO:0000255" key="2"/>
<evidence type="ECO:0000255" key="3">
    <source>
        <dbReference type="PROSITE-ProRule" id="PRU00521"/>
    </source>
</evidence>
<dbReference type="EMBL" id="AY205095">
    <property type="protein sequence ID" value="AAP30969.1"/>
    <property type="molecule type" value="Genomic_DNA"/>
</dbReference>
<dbReference type="EMBL" id="AB296230">
    <property type="protein sequence ID" value="BAF48462.1"/>
    <property type="molecule type" value="Genomic_DNA"/>
</dbReference>
<dbReference type="SMR" id="Q864K2"/>
<dbReference type="GlyCosmos" id="Q864K2">
    <property type="glycosylation" value="1 site, No reported glycans"/>
</dbReference>
<dbReference type="GO" id="GO:0005886">
    <property type="term" value="C:plasma membrane"/>
    <property type="evidence" value="ECO:0000250"/>
    <property type="project" value="UniProtKB"/>
</dbReference>
<dbReference type="GO" id="GO:0004980">
    <property type="term" value="F:melanocyte-stimulating hormone receptor activity"/>
    <property type="evidence" value="ECO:0007669"/>
    <property type="project" value="InterPro"/>
</dbReference>
<dbReference type="GO" id="GO:0007189">
    <property type="term" value="P:adenylate cyclase-activating G protein-coupled receptor signaling pathway"/>
    <property type="evidence" value="ECO:0007669"/>
    <property type="project" value="UniProtKB-ARBA"/>
</dbReference>
<dbReference type="CDD" id="cd15351">
    <property type="entry name" value="7tmA_MC1R"/>
    <property type="match status" value="1"/>
</dbReference>
<dbReference type="FunFam" id="1.20.1070.10:FF:000211">
    <property type="entry name" value="Melanocyte-stimulating hormone receptor"/>
    <property type="match status" value="1"/>
</dbReference>
<dbReference type="Gene3D" id="1.20.1070.10">
    <property type="entry name" value="Rhodopsin 7-helix transmembrane proteins"/>
    <property type="match status" value="1"/>
</dbReference>
<dbReference type="InterPro" id="IPR000276">
    <property type="entry name" value="GPCR_Rhodpsn"/>
</dbReference>
<dbReference type="InterPro" id="IPR017452">
    <property type="entry name" value="GPCR_Rhodpsn_7TM"/>
</dbReference>
<dbReference type="InterPro" id="IPR001671">
    <property type="entry name" value="Melcrt_ACTH_rcpt"/>
</dbReference>
<dbReference type="InterPro" id="IPR000761">
    <property type="entry name" value="MSH_rcpt"/>
</dbReference>
<dbReference type="PANTHER" id="PTHR22750">
    <property type="entry name" value="G-PROTEIN COUPLED RECEPTOR"/>
    <property type="match status" value="1"/>
</dbReference>
<dbReference type="Pfam" id="PF00001">
    <property type="entry name" value="7tm_1"/>
    <property type="match status" value="2"/>
</dbReference>
<dbReference type="PRINTS" id="PR00237">
    <property type="entry name" value="GPCRRHODOPSN"/>
</dbReference>
<dbReference type="PRINTS" id="PR00534">
    <property type="entry name" value="MCRFAMILY"/>
</dbReference>
<dbReference type="PRINTS" id="PR00536">
    <property type="entry name" value="MELNOCYTESHR"/>
</dbReference>
<dbReference type="SMART" id="SM01381">
    <property type="entry name" value="7TM_GPCR_Srsx"/>
    <property type="match status" value="1"/>
</dbReference>
<dbReference type="SUPFAM" id="SSF81321">
    <property type="entry name" value="Family A G protein-coupled receptor-like"/>
    <property type="match status" value="1"/>
</dbReference>
<dbReference type="PROSITE" id="PS00237">
    <property type="entry name" value="G_PROTEIN_RECEP_F1_1"/>
    <property type="match status" value="1"/>
</dbReference>
<dbReference type="PROSITE" id="PS50262">
    <property type="entry name" value="G_PROTEIN_RECEP_F1_2"/>
    <property type="match status" value="1"/>
</dbReference>
<comment type="function">
    <text evidence="1">Receptor for MSH (alpha, beta and gamma) and ACTH. The activity of this receptor is mediated by G proteins which activate adenylate cyclase. Mediates melanogenesis, the production of eumelanin (black/brown) and phaeomelanin (red/yellow), via regulation of cAMP signaling in melanocytes.</text>
</comment>
<comment type="subunit">
    <text evidence="1">Interacts with MGRN1, but does not undergo MGRN1-mediated ubiquitination; this interaction competes with GNAS-binding and thus inhibits agonist-induced cAMP production. Interacts with OPN3; the interaction results in a decrease in MC1R-mediated cAMP signaling and ultimately a decrease in melanin production in melanocytes.</text>
</comment>
<comment type="subcellular location">
    <subcellularLocation>
        <location evidence="1">Cell membrane</location>
        <topology evidence="2">Multi-pass membrane protein</topology>
    </subcellularLocation>
</comment>
<comment type="similarity">
    <text evidence="3">Belongs to the G-protein coupled receptor 1 family.</text>
</comment>
<feature type="chain" id="PRO_0000069803" description="Melanocyte-stimulating hormone receptor">
    <location>
        <begin position="1"/>
        <end position="317"/>
    </location>
</feature>
<feature type="topological domain" description="Extracellular" evidence="2">
    <location>
        <begin position="1"/>
        <end position="37"/>
    </location>
</feature>
<feature type="transmembrane region" description="Helical; Name=1" evidence="2">
    <location>
        <begin position="38"/>
        <end position="63"/>
    </location>
</feature>
<feature type="topological domain" description="Cytoplasmic" evidence="2">
    <location>
        <begin position="64"/>
        <end position="72"/>
    </location>
</feature>
<feature type="transmembrane region" description="Helical; Name=2" evidence="2">
    <location>
        <begin position="73"/>
        <end position="93"/>
    </location>
</feature>
<feature type="topological domain" description="Extracellular" evidence="2">
    <location>
        <begin position="94"/>
        <end position="118"/>
    </location>
</feature>
<feature type="transmembrane region" description="Helical; Name=3" evidence="2">
    <location>
        <begin position="119"/>
        <end position="140"/>
    </location>
</feature>
<feature type="topological domain" description="Cytoplasmic" evidence="2">
    <location>
        <begin position="141"/>
        <end position="163"/>
    </location>
</feature>
<feature type="transmembrane region" description="Helical; Name=4" evidence="2">
    <location>
        <begin position="164"/>
        <end position="183"/>
    </location>
</feature>
<feature type="topological domain" description="Extracellular" evidence="2">
    <location>
        <begin position="184"/>
        <end position="191"/>
    </location>
</feature>
<feature type="transmembrane region" description="Helical; Name=5" evidence="2">
    <location>
        <begin position="192"/>
        <end position="211"/>
    </location>
</feature>
<feature type="topological domain" description="Cytoplasmic" evidence="2">
    <location>
        <begin position="212"/>
        <end position="240"/>
    </location>
</feature>
<feature type="transmembrane region" description="Helical; Name=6" evidence="2">
    <location>
        <begin position="241"/>
        <end position="266"/>
    </location>
</feature>
<feature type="topological domain" description="Extracellular" evidence="2">
    <location>
        <begin position="267"/>
        <end position="279"/>
    </location>
</feature>
<feature type="transmembrane region" description="Helical; Name=7" evidence="2">
    <location>
        <begin position="280"/>
        <end position="300"/>
    </location>
</feature>
<feature type="topological domain" description="Cytoplasmic" evidence="2">
    <location>
        <begin position="301"/>
        <end position="317"/>
    </location>
</feature>
<feature type="lipid moiety-binding region" description="S-palmitoyl cysteine" evidence="2">
    <location>
        <position position="315"/>
    </location>
</feature>
<feature type="glycosylation site" description="N-linked (GlcNAc...) asparagine" evidence="2">
    <location>
        <position position="29"/>
    </location>
</feature>
<protein>
    <recommendedName>
        <fullName>Melanocyte-stimulating hormone receptor</fullName>
        <shortName>MSH-R</shortName>
    </recommendedName>
    <alternativeName>
        <fullName>Melanocortin receptor 1</fullName>
        <shortName>MC1-R</shortName>
    </alternativeName>
</protein>
<reference key="1">
    <citation type="journal article" date="2003" name="Am. J. Phys. Anthropol.">
        <title>Evolution of a pigmentation gene, the melanocortin-1 receptor, in primates.</title>
        <authorList>
            <person name="Mundy N.I."/>
            <person name="Kelly J."/>
        </authorList>
    </citation>
    <scope>NUCLEOTIDE SEQUENCE [GENOMIC DNA]</scope>
    <source>
        <strain>Isolate 1</strain>
    </source>
</reference>
<reference key="2">
    <citation type="journal article" date="2008" name="Am. J. Primatol.">
        <title>Variation of the melanocortin 1 receptor gene in the macaques.</title>
        <authorList>
            <person name="Nakayama K."/>
            <person name="Shotake T."/>
            <person name="Takeneka O."/>
            <person name="Ishida T."/>
        </authorList>
    </citation>
    <scope>NUCLEOTIDE SEQUENCE [GENOMIC DNA]</scope>
</reference>
<sequence length="317" mass="34724">MPVQGSQRRLLGSLNSTPTATPHLGLAANQTGARCLEVSIPDGLFLSLGLVSLVENVLVVTAIAKNRNLHSPMYCFICCLALSDLLVSGSNMLETAVILLLEAGALAARAAVVQQLDNVIDVITCSSMLSSLCFLGAIAVDRYISIFYALRYHSIVTLPRARRAVAAIWVASVLFSMLFIAYYDHAAVLLCLVVFFLAMLVLMAVLYVHMLARACQHAQGIARLHKRQCPAHQGFGLKGAATLTILLGIFFLCWGPFFLHLTLIVLCPQHPTCSCIFKNFNLFLALIICNAIIDPLIYAFRSQELRRTLKEVLLCSW</sequence>
<accession>Q864K2</accession>
<accession>A3KF99</accession>
<organism>
    <name type="scientific">Chlorocebus aethiops</name>
    <name type="common">Green monkey</name>
    <name type="synonym">Cercopithecus aethiops</name>
    <dbReference type="NCBI Taxonomy" id="9534"/>
    <lineage>
        <taxon>Eukaryota</taxon>
        <taxon>Metazoa</taxon>
        <taxon>Chordata</taxon>
        <taxon>Craniata</taxon>
        <taxon>Vertebrata</taxon>
        <taxon>Euteleostomi</taxon>
        <taxon>Mammalia</taxon>
        <taxon>Eutheria</taxon>
        <taxon>Euarchontoglires</taxon>
        <taxon>Primates</taxon>
        <taxon>Haplorrhini</taxon>
        <taxon>Catarrhini</taxon>
        <taxon>Cercopithecidae</taxon>
        <taxon>Cercopithecinae</taxon>
        <taxon>Chlorocebus</taxon>
    </lineage>
</organism>
<keyword id="KW-1003">Cell membrane</keyword>
<keyword id="KW-0297">G-protein coupled receptor</keyword>
<keyword id="KW-0325">Glycoprotein</keyword>
<keyword id="KW-0449">Lipoprotein</keyword>
<keyword id="KW-0472">Membrane</keyword>
<keyword id="KW-0564">Palmitate</keyword>
<keyword id="KW-0675">Receptor</keyword>
<keyword id="KW-0807">Transducer</keyword>
<keyword id="KW-0812">Transmembrane</keyword>
<keyword id="KW-1133">Transmembrane helix</keyword>